<feature type="chain" id="PRO_0000274246" description="Protein FAM222B">
    <location>
        <begin position="1"/>
        <end position="562"/>
    </location>
</feature>
<feature type="region of interest" description="Disordered" evidence="1">
    <location>
        <begin position="147"/>
        <end position="242"/>
    </location>
</feature>
<feature type="region of interest" description="Disordered" evidence="1">
    <location>
        <begin position="537"/>
        <end position="562"/>
    </location>
</feature>
<feature type="compositionally biased region" description="Low complexity" evidence="1">
    <location>
        <begin position="147"/>
        <end position="167"/>
    </location>
</feature>
<feature type="compositionally biased region" description="Low complexity" evidence="1">
    <location>
        <begin position="183"/>
        <end position="201"/>
    </location>
</feature>
<feature type="sequence conflict" description="In Ref. 3; AAH63099." evidence="2" ref="3">
    <original>Q</original>
    <variation>L</variation>
    <location>
        <position position="155"/>
    </location>
</feature>
<organism>
    <name type="scientific">Mus musculus</name>
    <name type="common">Mouse</name>
    <dbReference type="NCBI Taxonomy" id="10090"/>
    <lineage>
        <taxon>Eukaryota</taxon>
        <taxon>Metazoa</taxon>
        <taxon>Chordata</taxon>
        <taxon>Craniata</taxon>
        <taxon>Vertebrata</taxon>
        <taxon>Euteleostomi</taxon>
        <taxon>Mammalia</taxon>
        <taxon>Eutheria</taxon>
        <taxon>Euarchontoglires</taxon>
        <taxon>Glires</taxon>
        <taxon>Rodentia</taxon>
        <taxon>Myomorpha</taxon>
        <taxon>Muroidea</taxon>
        <taxon>Muridae</taxon>
        <taxon>Murinae</taxon>
        <taxon>Mus</taxon>
        <taxon>Mus</taxon>
    </lineage>
</organism>
<evidence type="ECO:0000256" key="1">
    <source>
        <dbReference type="SAM" id="MobiDB-lite"/>
    </source>
</evidence>
<evidence type="ECO:0000305" key="2"/>
<gene>
    <name type="primary">Fam222b</name>
</gene>
<proteinExistence type="evidence at transcript level"/>
<dbReference type="EMBL" id="AK137590">
    <property type="protein sequence ID" value="BAE23423.1"/>
    <property type="molecule type" value="mRNA"/>
</dbReference>
<dbReference type="EMBL" id="AK141119">
    <property type="protein sequence ID" value="BAE24565.1"/>
    <property type="molecule type" value="mRNA"/>
</dbReference>
<dbReference type="EMBL" id="AL591070">
    <property type="status" value="NOT_ANNOTATED_CDS"/>
    <property type="molecule type" value="Genomic_DNA"/>
</dbReference>
<dbReference type="EMBL" id="BC017647">
    <property type="protein sequence ID" value="AAH17647.1"/>
    <property type="molecule type" value="mRNA"/>
</dbReference>
<dbReference type="EMBL" id="BC063099">
    <property type="protein sequence ID" value="AAH63099.1"/>
    <property type="molecule type" value="mRNA"/>
</dbReference>
<dbReference type="CCDS" id="CCDS25089.1"/>
<dbReference type="RefSeq" id="NP_001351039.1">
    <property type="nucleotide sequence ID" value="NM_001364110.1"/>
</dbReference>
<dbReference type="RefSeq" id="NP_663405.1">
    <property type="nucleotide sequence ID" value="NM_145430.3"/>
</dbReference>
<dbReference type="RefSeq" id="XP_006533024.1">
    <property type="nucleotide sequence ID" value="XM_006532961.3"/>
</dbReference>
<dbReference type="FunCoup" id="Q6P539">
    <property type="interactions" value="1679"/>
</dbReference>
<dbReference type="STRING" id="10090.ENSMUSP00000121832"/>
<dbReference type="GlyGen" id="Q6P539">
    <property type="glycosylation" value="6 sites, 1 O-linked glycan (1 site)"/>
</dbReference>
<dbReference type="iPTMnet" id="Q6P539"/>
<dbReference type="PhosphoSitePlus" id="Q6P539"/>
<dbReference type="PaxDb" id="10090-ENSMUSP00000121832"/>
<dbReference type="ProteomicsDB" id="271539"/>
<dbReference type="Antibodypedia" id="63797">
    <property type="antibodies" value="48 antibodies from 12 providers"/>
</dbReference>
<dbReference type="Ensembl" id="ENSMUST00000073705.12">
    <property type="protein sequence ID" value="ENSMUSP00000073384.6"/>
    <property type="gene ID" value="ENSMUSG00000037750.17"/>
</dbReference>
<dbReference type="Ensembl" id="ENSMUST00000155571.2">
    <property type="protein sequence ID" value="ENSMUSP00000121832.2"/>
    <property type="gene ID" value="ENSMUSG00000037750.17"/>
</dbReference>
<dbReference type="GeneID" id="216971"/>
<dbReference type="KEGG" id="mmu:216971"/>
<dbReference type="UCSC" id="uc007kic.2">
    <property type="organism name" value="mouse"/>
</dbReference>
<dbReference type="AGR" id="MGI:2384939"/>
<dbReference type="CTD" id="55731"/>
<dbReference type="MGI" id="MGI:2384939">
    <property type="gene designation" value="Fam222b"/>
</dbReference>
<dbReference type="VEuPathDB" id="HostDB:ENSMUSG00000037750"/>
<dbReference type="eggNOG" id="ENOG502QQED">
    <property type="taxonomic scope" value="Eukaryota"/>
</dbReference>
<dbReference type="GeneTree" id="ENSGT00530000063811"/>
<dbReference type="HOGENOM" id="CLU_027495_0_0_1"/>
<dbReference type="InParanoid" id="Q6P539"/>
<dbReference type="OMA" id="MTHYTNG"/>
<dbReference type="OrthoDB" id="8950865at2759"/>
<dbReference type="PhylomeDB" id="Q6P539"/>
<dbReference type="TreeFam" id="TF331508"/>
<dbReference type="BioGRID-ORCS" id="216971">
    <property type="hits" value="2 hits in 77 CRISPR screens"/>
</dbReference>
<dbReference type="ChiTaRS" id="Fam222b">
    <property type="organism name" value="mouse"/>
</dbReference>
<dbReference type="PRO" id="PR:Q6P539"/>
<dbReference type="Proteomes" id="UP000000589">
    <property type="component" value="Chromosome 11"/>
</dbReference>
<dbReference type="RNAct" id="Q6P539">
    <property type="molecule type" value="protein"/>
</dbReference>
<dbReference type="Bgee" id="ENSMUSG00000037750">
    <property type="expression patterns" value="Expressed in animal zygote and 215 other cell types or tissues"/>
</dbReference>
<dbReference type="ExpressionAtlas" id="Q6P539">
    <property type="expression patterns" value="baseline and differential"/>
</dbReference>
<dbReference type="GO" id="GO:0005654">
    <property type="term" value="C:nucleoplasm"/>
    <property type="evidence" value="ECO:0007669"/>
    <property type="project" value="Ensembl"/>
</dbReference>
<dbReference type="InterPro" id="IPR029340">
    <property type="entry name" value="FAM222"/>
</dbReference>
<dbReference type="PANTHER" id="PTHR16070">
    <property type="entry name" value="PROTEIN FAM222A-RELATED"/>
    <property type="match status" value="1"/>
</dbReference>
<dbReference type="PANTHER" id="PTHR16070:SF1">
    <property type="entry name" value="PROTEIN FAM222B"/>
    <property type="match status" value="1"/>
</dbReference>
<dbReference type="Pfam" id="PF15258">
    <property type="entry name" value="FAM222A"/>
    <property type="match status" value="1"/>
</dbReference>
<protein>
    <recommendedName>
        <fullName>Protein FAM222B</fullName>
    </recommendedName>
</protein>
<accession>Q6P539</accession>
<accession>Q3UV50</accession>
<accession>Q8VD11</accession>
<reference key="1">
    <citation type="journal article" date="2005" name="Science">
        <title>The transcriptional landscape of the mammalian genome.</title>
        <authorList>
            <person name="Carninci P."/>
            <person name="Kasukawa T."/>
            <person name="Katayama S."/>
            <person name="Gough J."/>
            <person name="Frith M.C."/>
            <person name="Maeda N."/>
            <person name="Oyama R."/>
            <person name="Ravasi T."/>
            <person name="Lenhard B."/>
            <person name="Wells C."/>
            <person name="Kodzius R."/>
            <person name="Shimokawa K."/>
            <person name="Bajic V.B."/>
            <person name="Brenner S.E."/>
            <person name="Batalov S."/>
            <person name="Forrest A.R."/>
            <person name="Zavolan M."/>
            <person name="Davis M.J."/>
            <person name="Wilming L.G."/>
            <person name="Aidinis V."/>
            <person name="Allen J.E."/>
            <person name="Ambesi-Impiombato A."/>
            <person name="Apweiler R."/>
            <person name="Aturaliya R.N."/>
            <person name="Bailey T.L."/>
            <person name="Bansal M."/>
            <person name="Baxter L."/>
            <person name="Beisel K.W."/>
            <person name="Bersano T."/>
            <person name="Bono H."/>
            <person name="Chalk A.M."/>
            <person name="Chiu K.P."/>
            <person name="Choudhary V."/>
            <person name="Christoffels A."/>
            <person name="Clutterbuck D.R."/>
            <person name="Crowe M.L."/>
            <person name="Dalla E."/>
            <person name="Dalrymple B.P."/>
            <person name="de Bono B."/>
            <person name="Della Gatta G."/>
            <person name="di Bernardo D."/>
            <person name="Down T."/>
            <person name="Engstrom P."/>
            <person name="Fagiolini M."/>
            <person name="Faulkner G."/>
            <person name="Fletcher C.F."/>
            <person name="Fukushima T."/>
            <person name="Furuno M."/>
            <person name="Futaki S."/>
            <person name="Gariboldi M."/>
            <person name="Georgii-Hemming P."/>
            <person name="Gingeras T.R."/>
            <person name="Gojobori T."/>
            <person name="Green R.E."/>
            <person name="Gustincich S."/>
            <person name="Harbers M."/>
            <person name="Hayashi Y."/>
            <person name="Hensch T.K."/>
            <person name="Hirokawa N."/>
            <person name="Hill D."/>
            <person name="Huminiecki L."/>
            <person name="Iacono M."/>
            <person name="Ikeo K."/>
            <person name="Iwama A."/>
            <person name="Ishikawa T."/>
            <person name="Jakt M."/>
            <person name="Kanapin A."/>
            <person name="Katoh M."/>
            <person name="Kawasawa Y."/>
            <person name="Kelso J."/>
            <person name="Kitamura H."/>
            <person name="Kitano H."/>
            <person name="Kollias G."/>
            <person name="Krishnan S.P."/>
            <person name="Kruger A."/>
            <person name="Kummerfeld S.K."/>
            <person name="Kurochkin I.V."/>
            <person name="Lareau L.F."/>
            <person name="Lazarevic D."/>
            <person name="Lipovich L."/>
            <person name="Liu J."/>
            <person name="Liuni S."/>
            <person name="McWilliam S."/>
            <person name="Madan Babu M."/>
            <person name="Madera M."/>
            <person name="Marchionni L."/>
            <person name="Matsuda H."/>
            <person name="Matsuzawa S."/>
            <person name="Miki H."/>
            <person name="Mignone F."/>
            <person name="Miyake S."/>
            <person name="Morris K."/>
            <person name="Mottagui-Tabar S."/>
            <person name="Mulder N."/>
            <person name="Nakano N."/>
            <person name="Nakauchi H."/>
            <person name="Ng P."/>
            <person name="Nilsson R."/>
            <person name="Nishiguchi S."/>
            <person name="Nishikawa S."/>
            <person name="Nori F."/>
            <person name="Ohara O."/>
            <person name="Okazaki Y."/>
            <person name="Orlando V."/>
            <person name="Pang K.C."/>
            <person name="Pavan W.J."/>
            <person name="Pavesi G."/>
            <person name="Pesole G."/>
            <person name="Petrovsky N."/>
            <person name="Piazza S."/>
            <person name="Reed J."/>
            <person name="Reid J.F."/>
            <person name="Ring B.Z."/>
            <person name="Ringwald M."/>
            <person name="Rost B."/>
            <person name="Ruan Y."/>
            <person name="Salzberg S.L."/>
            <person name="Sandelin A."/>
            <person name="Schneider C."/>
            <person name="Schoenbach C."/>
            <person name="Sekiguchi K."/>
            <person name="Semple C.A."/>
            <person name="Seno S."/>
            <person name="Sessa L."/>
            <person name="Sheng Y."/>
            <person name="Shibata Y."/>
            <person name="Shimada H."/>
            <person name="Shimada K."/>
            <person name="Silva D."/>
            <person name="Sinclair B."/>
            <person name="Sperling S."/>
            <person name="Stupka E."/>
            <person name="Sugiura K."/>
            <person name="Sultana R."/>
            <person name="Takenaka Y."/>
            <person name="Taki K."/>
            <person name="Tammoja K."/>
            <person name="Tan S.L."/>
            <person name="Tang S."/>
            <person name="Taylor M.S."/>
            <person name="Tegner J."/>
            <person name="Teichmann S.A."/>
            <person name="Ueda H.R."/>
            <person name="van Nimwegen E."/>
            <person name="Verardo R."/>
            <person name="Wei C.L."/>
            <person name="Yagi K."/>
            <person name="Yamanishi H."/>
            <person name="Zabarovsky E."/>
            <person name="Zhu S."/>
            <person name="Zimmer A."/>
            <person name="Hide W."/>
            <person name="Bult C."/>
            <person name="Grimmond S.M."/>
            <person name="Teasdale R.D."/>
            <person name="Liu E.T."/>
            <person name="Brusic V."/>
            <person name="Quackenbush J."/>
            <person name="Wahlestedt C."/>
            <person name="Mattick J.S."/>
            <person name="Hume D.A."/>
            <person name="Kai C."/>
            <person name="Sasaki D."/>
            <person name="Tomaru Y."/>
            <person name="Fukuda S."/>
            <person name="Kanamori-Katayama M."/>
            <person name="Suzuki M."/>
            <person name="Aoki J."/>
            <person name="Arakawa T."/>
            <person name="Iida J."/>
            <person name="Imamura K."/>
            <person name="Itoh M."/>
            <person name="Kato T."/>
            <person name="Kawaji H."/>
            <person name="Kawagashira N."/>
            <person name="Kawashima T."/>
            <person name="Kojima M."/>
            <person name="Kondo S."/>
            <person name="Konno H."/>
            <person name="Nakano K."/>
            <person name="Ninomiya N."/>
            <person name="Nishio T."/>
            <person name="Okada M."/>
            <person name="Plessy C."/>
            <person name="Shibata K."/>
            <person name="Shiraki T."/>
            <person name="Suzuki S."/>
            <person name="Tagami M."/>
            <person name="Waki K."/>
            <person name="Watahiki A."/>
            <person name="Okamura-Oho Y."/>
            <person name="Suzuki H."/>
            <person name="Kawai J."/>
            <person name="Hayashizaki Y."/>
        </authorList>
    </citation>
    <scope>NUCLEOTIDE SEQUENCE [LARGE SCALE MRNA]</scope>
    <source>
        <strain>C57BL/6J</strain>
        <tissue>Bone</tissue>
        <tissue>Cerebellum</tissue>
    </source>
</reference>
<reference key="2">
    <citation type="journal article" date="2009" name="PLoS Biol.">
        <title>Lineage-specific biology revealed by a finished genome assembly of the mouse.</title>
        <authorList>
            <person name="Church D.M."/>
            <person name="Goodstadt L."/>
            <person name="Hillier L.W."/>
            <person name="Zody M.C."/>
            <person name="Goldstein S."/>
            <person name="She X."/>
            <person name="Bult C.J."/>
            <person name="Agarwala R."/>
            <person name="Cherry J.L."/>
            <person name="DiCuccio M."/>
            <person name="Hlavina W."/>
            <person name="Kapustin Y."/>
            <person name="Meric P."/>
            <person name="Maglott D."/>
            <person name="Birtle Z."/>
            <person name="Marques A.C."/>
            <person name="Graves T."/>
            <person name="Zhou S."/>
            <person name="Teague B."/>
            <person name="Potamousis K."/>
            <person name="Churas C."/>
            <person name="Place M."/>
            <person name="Herschleb J."/>
            <person name="Runnheim R."/>
            <person name="Forrest D."/>
            <person name="Amos-Landgraf J."/>
            <person name="Schwartz D.C."/>
            <person name="Cheng Z."/>
            <person name="Lindblad-Toh K."/>
            <person name="Eichler E.E."/>
            <person name="Ponting C.P."/>
        </authorList>
    </citation>
    <scope>NUCLEOTIDE SEQUENCE [LARGE SCALE GENOMIC DNA]</scope>
    <source>
        <strain>C57BL/6J</strain>
    </source>
</reference>
<reference key="3">
    <citation type="journal article" date="2004" name="Genome Res.">
        <title>The status, quality, and expansion of the NIH full-length cDNA project: the Mammalian Gene Collection (MGC).</title>
        <authorList>
            <consortium name="The MGC Project Team"/>
        </authorList>
    </citation>
    <scope>NUCLEOTIDE SEQUENCE [LARGE SCALE MRNA]</scope>
    <source>
        <tissue>Embryo</tissue>
        <tissue>Eye</tissue>
    </source>
</reference>
<keyword id="KW-1185">Reference proteome</keyword>
<name>F222B_MOUSE</name>
<sequence length="562" mass="59616">MLACLPGPGDLSLQLLSHTQMNTGLQKWDTTQKMRTAHYPTPAELDAYAKKVANNPLTIKIFPNSVKVPQRKHVRRTVNGLDTSAQRYSPYPTQAATKAGLLAIVKVPAKSILKDFDGTRARFLPEAIMNPPVAPYATVAPSTLAHPQAQALARQQALQHAQTLAHAPPQTLQHPQGIPPPQALSHPQSLQQPQGLGHPQQMAQTQGLVHPQALTHQGLQHPPNPLLHGGRKMPDSDAPPNVTVSTSTIPLSMAATLQHSQPPDLSSIVHQINQFCQTRAGISTTSVCEGQIANPSPISRSLLINASTRVSTHSVPTPMPSCVVNPMEHTHAATAALPAAGPVNLPTGISRAPTGYPSDLKPVTWNQHQLAHLQQMCSEAGGTPAPGLTGKHTAGRELAGPGFVGKAAAYPQELCLAQSFHLKPPLEKPTPSPPVNGLPAPLAYPNGHYFQPLWNNILPTPNSDSSGSQDLTMPFHGGQPTGAPLDCGAAPGAHYRAGTGGGPVASQNSLMQTVDYLSGDFQQACFREQSLAMLSKAHRAPGTRAPDPTDSRSLHIQHPGYR</sequence>
<comment type="similarity">
    <text evidence="2">Belongs to the FAM222 family.</text>
</comment>